<name>HOT13_YEAST</name>
<sequence>MIETAIYGKTVDDQSRCVHWHLPKDVIAIRFKCCDKYYACFECHQELSSHPLEKYDLLDDANKHLIICGVCRHEMTFAEYYDYNSNLICPNCRSPFNPGCKLHYHLYFQNPPPAMC</sequence>
<keyword id="KW-0472">Membrane</keyword>
<keyword id="KW-0479">Metal-binding</keyword>
<keyword id="KW-0496">Mitochondrion</keyword>
<keyword id="KW-0653">Protein transport</keyword>
<keyword id="KW-1185">Reference proteome</keyword>
<keyword id="KW-0811">Translocation</keyword>
<keyword id="KW-0813">Transport</keyword>
<keyword id="KW-0862">Zinc</keyword>
<keyword id="KW-0863">Zinc-finger</keyword>
<comment type="function">
    <text evidence="2">Required for the assembly or recycling of the small Tim proteins in the mitochondrial intermembrane, thereby participating in the import and insertion of multi-pass transmembrane proteins into the mitochondrial inner membrane. Probably acts by facilitating the formation of disulfide bonds in small Tim proteins.</text>
</comment>
<comment type="subunit">
    <text>Interacts with the small Tim proteins TIM8, TIM9, TIM10, TIM12, and TIM13.</text>
</comment>
<comment type="subcellular location">
    <subcellularLocation>
        <location evidence="2">Mitochondrion intermembrane space</location>
    </subcellularLocation>
    <subcellularLocation>
        <location evidence="2">Mitochondrion membrane</location>
        <topology evidence="2">Peripheral membrane protein</topology>
    </subcellularLocation>
</comment>
<evidence type="ECO:0000255" key="1">
    <source>
        <dbReference type="PROSITE-ProRule" id="PRU00601"/>
    </source>
</evidence>
<evidence type="ECO:0000269" key="2">
    <source>
    </source>
</evidence>
<evidence type="ECO:0000305" key="3"/>
<proteinExistence type="evidence at protein level"/>
<dbReference type="EMBL" id="Z28084">
    <property type="protein sequence ID" value="CAA81922.1"/>
    <property type="molecule type" value="Genomic_DNA"/>
</dbReference>
<dbReference type="EMBL" id="AY558265">
    <property type="protein sequence ID" value="AAS56591.1"/>
    <property type="molecule type" value="Genomic_DNA"/>
</dbReference>
<dbReference type="EMBL" id="BK006944">
    <property type="protein sequence ID" value="DAA09074.1"/>
    <property type="molecule type" value="Genomic_DNA"/>
</dbReference>
<dbReference type="PIR" id="S37909">
    <property type="entry name" value="S37909"/>
</dbReference>
<dbReference type="RefSeq" id="NP_012839.1">
    <property type="nucleotide sequence ID" value="NM_001179650.1"/>
</dbReference>
<dbReference type="BioGRID" id="34049">
    <property type="interactions" value="80"/>
</dbReference>
<dbReference type="FunCoup" id="P36078">
    <property type="interactions" value="52"/>
</dbReference>
<dbReference type="IntAct" id="P36078">
    <property type="interactions" value="2"/>
</dbReference>
<dbReference type="MINT" id="P36078"/>
<dbReference type="STRING" id="4932.YKL084W"/>
<dbReference type="iPTMnet" id="P36078"/>
<dbReference type="PaxDb" id="4932-YKL084W"/>
<dbReference type="PeptideAtlas" id="P36078"/>
<dbReference type="EnsemblFungi" id="YKL084W_mRNA">
    <property type="protein sequence ID" value="YKL084W"/>
    <property type="gene ID" value="YKL084W"/>
</dbReference>
<dbReference type="GeneID" id="853778"/>
<dbReference type="KEGG" id="sce:YKL084W"/>
<dbReference type="AGR" id="SGD:S000001567"/>
<dbReference type="SGD" id="S000001567">
    <property type="gene designation" value="HOT13"/>
</dbReference>
<dbReference type="VEuPathDB" id="FungiDB:YKL084W"/>
<dbReference type="eggNOG" id="KOG1940">
    <property type="taxonomic scope" value="Eukaryota"/>
</dbReference>
<dbReference type="HOGENOM" id="CLU_143932_0_0_1"/>
<dbReference type="InParanoid" id="P36078"/>
<dbReference type="OMA" id="ETRCAHY"/>
<dbReference type="OrthoDB" id="411372at2759"/>
<dbReference type="BioCyc" id="YEAST:G3O-31878-MONOMER"/>
<dbReference type="BioGRID-ORCS" id="853778">
    <property type="hits" value="0 hits in 10 CRISPR screens"/>
</dbReference>
<dbReference type="PRO" id="PR:P36078"/>
<dbReference type="Proteomes" id="UP000002311">
    <property type="component" value="Chromosome XI"/>
</dbReference>
<dbReference type="RNAct" id="P36078">
    <property type="molecule type" value="protein"/>
</dbReference>
<dbReference type="GO" id="GO:0005758">
    <property type="term" value="C:mitochondrial intermembrane space"/>
    <property type="evidence" value="ECO:0000314"/>
    <property type="project" value="SGD"/>
</dbReference>
<dbReference type="GO" id="GO:0031966">
    <property type="term" value="C:mitochondrial membrane"/>
    <property type="evidence" value="ECO:0007669"/>
    <property type="project" value="UniProtKB-SubCell"/>
</dbReference>
<dbReference type="GO" id="GO:0008270">
    <property type="term" value="F:zinc ion binding"/>
    <property type="evidence" value="ECO:0000314"/>
    <property type="project" value="SGD"/>
</dbReference>
<dbReference type="GO" id="GO:0045041">
    <property type="term" value="P:protein import into mitochondrial intermembrane space"/>
    <property type="evidence" value="ECO:0000315"/>
    <property type="project" value="SGD"/>
</dbReference>
<dbReference type="InterPro" id="IPR052604">
    <property type="entry name" value="Mito_Tim_assembly_helper"/>
</dbReference>
<dbReference type="InterPro" id="IPR016694">
    <property type="entry name" value="UCP017292"/>
</dbReference>
<dbReference type="InterPro" id="IPR008913">
    <property type="entry name" value="Znf_CHY"/>
</dbReference>
<dbReference type="InterPro" id="IPR037274">
    <property type="entry name" value="Znf_CHY_sf"/>
</dbReference>
<dbReference type="PANTHER" id="PTHR28082:SF1">
    <property type="entry name" value="HELPER OF TIM PROTEIN 13"/>
    <property type="match status" value="1"/>
</dbReference>
<dbReference type="PANTHER" id="PTHR28082">
    <property type="entry name" value="ZINC FINGER PROTEIN"/>
    <property type="match status" value="1"/>
</dbReference>
<dbReference type="Pfam" id="PF05495">
    <property type="entry name" value="zf-CHY"/>
    <property type="match status" value="1"/>
</dbReference>
<dbReference type="PIRSF" id="PIRSF017292">
    <property type="entry name" value="UCP017292_Znf_CHY"/>
    <property type="match status" value="1"/>
</dbReference>
<dbReference type="SUPFAM" id="SSF161219">
    <property type="entry name" value="CHY zinc finger-like"/>
    <property type="match status" value="1"/>
</dbReference>
<dbReference type="PROSITE" id="PS51266">
    <property type="entry name" value="ZF_CHY"/>
    <property type="match status" value="1"/>
</dbReference>
<feature type="chain" id="PRO_0000203165" description="Helper of Tim protein 13">
    <location>
        <begin position="1"/>
        <end position="116"/>
    </location>
</feature>
<feature type="zinc finger region" description="CHY-type; degenerate" evidence="1">
    <location>
        <begin position="10"/>
        <end position="94"/>
    </location>
</feature>
<feature type="binding site" evidence="1">
    <location>
        <position position="17"/>
    </location>
    <ligand>
        <name>Zn(2+)</name>
        <dbReference type="ChEBI" id="CHEBI:29105"/>
        <label>1</label>
    </ligand>
</feature>
<feature type="binding site" evidence="1">
    <location>
        <position position="19"/>
    </location>
    <ligand>
        <name>Zn(2+)</name>
        <dbReference type="ChEBI" id="CHEBI:29105"/>
        <label>1</label>
    </ligand>
</feature>
<feature type="binding site" evidence="1">
    <location>
        <position position="40"/>
    </location>
    <ligand>
        <name>Zn(2+)</name>
        <dbReference type="ChEBI" id="CHEBI:29105"/>
        <label>1</label>
    </ligand>
</feature>
<feature type="binding site" evidence="1">
    <location>
        <position position="43"/>
    </location>
    <ligand>
        <name>Zn(2+)</name>
        <dbReference type="ChEBI" id="CHEBI:29105"/>
        <label>1</label>
    </ligand>
</feature>
<feature type="binding site" evidence="1">
    <location>
        <position position="68"/>
    </location>
    <ligand>
        <name>Zn(2+)</name>
        <dbReference type="ChEBI" id="CHEBI:29105"/>
        <label>2</label>
    </ligand>
</feature>
<feature type="binding site" evidence="1">
    <location>
        <position position="71"/>
    </location>
    <ligand>
        <name>Zn(2+)</name>
        <dbReference type="ChEBI" id="CHEBI:29105"/>
        <label>2</label>
    </ligand>
</feature>
<feature type="binding site" evidence="1">
    <location>
        <position position="89"/>
    </location>
    <ligand>
        <name>Zn(2+)</name>
        <dbReference type="ChEBI" id="CHEBI:29105"/>
        <label>2</label>
    </ligand>
</feature>
<feature type="binding site" evidence="1">
    <location>
        <position position="92"/>
    </location>
    <ligand>
        <name>Zn(2+)</name>
        <dbReference type="ChEBI" id="CHEBI:29105"/>
        <label>2</label>
    </ligand>
</feature>
<feature type="sequence conflict" description="In Ref. 3; AAS56591." evidence="3" ref="3">
    <original>C</original>
    <variation>R</variation>
    <location>
        <position position="71"/>
    </location>
</feature>
<organism>
    <name type="scientific">Saccharomyces cerevisiae (strain ATCC 204508 / S288c)</name>
    <name type="common">Baker's yeast</name>
    <dbReference type="NCBI Taxonomy" id="559292"/>
    <lineage>
        <taxon>Eukaryota</taxon>
        <taxon>Fungi</taxon>
        <taxon>Dikarya</taxon>
        <taxon>Ascomycota</taxon>
        <taxon>Saccharomycotina</taxon>
        <taxon>Saccharomycetes</taxon>
        <taxon>Saccharomycetales</taxon>
        <taxon>Saccharomycetaceae</taxon>
        <taxon>Saccharomyces</taxon>
    </lineage>
</organism>
<reference key="1">
    <citation type="journal article" date="1994" name="Nature">
        <title>Complete DNA sequence of yeast chromosome XI.</title>
        <authorList>
            <person name="Dujon B."/>
            <person name="Alexandraki D."/>
            <person name="Andre B."/>
            <person name="Ansorge W."/>
            <person name="Baladron V."/>
            <person name="Ballesta J.P.G."/>
            <person name="Banrevi A."/>
            <person name="Bolle P.-A."/>
            <person name="Bolotin-Fukuhara M."/>
            <person name="Bossier P."/>
            <person name="Bou G."/>
            <person name="Boyer J."/>
            <person name="Buitrago M.J."/>
            <person name="Cheret G."/>
            <person name="Colleaux L."/>
            <person name="Daignan-Fornier B."/>
            <person name="del Rey F."/>
            <person name="Dion C."/>
            <person name="Domdey H."/>
            <person name="Duesterhoeft A."/>
            <person name="Duesterhus S."/>
            <person name="Entian K.-D."/>
            <person name="Erfle H."/>
            <person name="Esteban P.F."/>
            <person name="Feldmann H."/>
            <person name="Fernandes L."/>
            <person name="Fobo G.M."/>
            <person name="Fritz C."/>
            <person name="Fukuhara H."/>
            <person name="Gabel C."/>
            <person name="Gaillon L."/>
            <person name="Garcia-Cantalejo J.M."/>
            <person name="Garcia-Ramirez J.J."/>
            <person name="Gent M.E."/>
            <person name="Ghazvini M."/>
            <person name="Goffeau A."/>
            <person name="Gonzalez A."/>
            <person name="Grothues D."/>
            <person name="Guerreiro P."/>
            <person name="Hegemann J.H."/>
            <person name="Hewitt N."/>
            <person name="Hilger F."/>
            <person name="Hollenberg C.P."/>
            <person name="Horaitis O."/>
            <person name="Indge K.J."/>
            <person name="Jacquier A."/>
            <person name="James C.M."/>
            <person name="Jauniaux J.-C."/>
            <person name="Jimenez A."/>
            <person name="Keuchel H."/>
            <person name="Kirchrath L."/>
            <person name="Kleine K."/>
            <person name="Koetter P."/>
            <person name="Legrain P."/>
            <person name="Liebl S."/>
            <person name="Louis E.J."/>
            <person name="Maia e Silva A."/>
            <person name="Marck C."/>
            <person name="Monnier A.-L."/>
            <person name="Moestl D."/>
            <person name="Mueller S."/>
            <person name="Obermaier B."/>
            <person name="Oliver S.G."/>
            <person name="Pallier C."/>
            <person name="Pascolo S."/>
            <person name="Pfeiffer F."/>
            <person name="Philippsen P."/>
            <person name="Planta R.J."/>
            <person name="Pohl F.M."/>
            <person name="Pohl T.M."/>
            <person name="Poehlmann R."/>
            <person name="Portetelle D."/>
            <person name="Purnelle B."/>
            <person name="Puzos V."/>
            <person name="Ramezani Rad M."/>
            <person name="Rasmussen S.W."/>
            <person name="Remacha M.A."/>
            <person name="Revuelta J.L."/>
            <person name="Richard G.-F."/>
            <person name="Rieger M."/>
            <person name="Rodrigues-Pousada C."/>
            <person name="Rose M."/>
            <person name="Rupp T."/>
            <person name="Santos M.A."/>
            <person name="Schwager C."/>
            <person name="Sensen C."/>
            <person name="Skala J."/>
            <person name="Soares H."/>
            <person name="Sor F."/>
            <person name="Stegemann J."/>
            <person name="Tettelin H."/>
            <person name="Thierry A."/>
            <person name="Tzermia M."/>
            <person name="Urrestarazu L.A."/>
            <person name="van Dyck L."/>
            <person name="van Vliet-Reedijk J.C."/>
            <person name="Valens M."/>
            <person name="Vandenbol M."/>
            <person name="Vilela C."/>
            <person name="Vissers S."/>
            <person name="von Wettstein D."/>
            <person name="Voss H."/>
            <person name="Wiemann S."/>
            <person name="Xu G."/>
            <person name="Zimmermann J."/>
            <person name="Haasemann M."/>
            <person name="Becker I."/>
            <person name="Mewes H.-W."/>
        </authorList>
    </citation>
    <scope>NUCLEOTIDE SEQUENCE [LARGE SCALE GENOMIC DNA]</scope>
    <source>
        <strain>ATCC 204508 / S288c</strain>
    </source>
</reference>
<reference key="2">
    <citation type="journal article" date="2014" name="G3 (Bethesda)">
        <title>The reference genome sequence of Saccharomyces cerevisiae: Then and now.</title>
        <authorList>
            <person name="Engel S.R."/>
            <person name="Dietrich F.S."/>
            <person name="Fisk D.G."/>
            <person name="Binkley G."/>
            <person name="Balakrishnan R."/>
            <person name="Costanzo M.C."/>
            <person name="Dwight S.S."/>
            <person name="Hitz B.C."/>
            <person name="Karra K."/>
            <person name="Nash R.S."/>
            <person name="Weng S."/>
            <person name="Wong E.D."/>
            <person name="Lloyd P."/>
            <person name="Skrzypek M.S."/>
            <person name="Miyasato S.R."/>
            <person name="Simison M."/>
            <person name="Cherry J.M."/>
        </authorList>
    </citation>
    <scope>GENOME REANNOTATION</scope>
    <source>
        <strain>ATCC 204508 / S288c</strain>
    </source>
</reference>
<reference key="3">
    <citation type="journal article" date="2007" name="Genome Res.">
        <title>Approaching a complete repository of sequence-verified protein-encoding clones for Saccharomyces cerevisiae.</title>
        <authorList>
            <person name="Hu Y."/>
            <person name="Rolfs A."/>
            <person name="Bhullar B."/>
            <person name="Murthy T.V.S."/>
            <person name="Zhu C."/>
            <person name="Berger M.F."/>
            <person name="Camargo A.A."/>
            <person name="Kelley F."/>
            <person name="McCarron S."/>
            <person name="Jepson D."/>
            <person name="Richardson A."/>
            <person name="Raphael J."/>
            <person name="Moreira D."/>
            <person name="Taycher E."/>
            <person name="Zuo D."/>
            <person name="Mohr S."/>
            <person name="Kane M.F."/>
            <person name="Williamson J."/>
            <person name="Simpson A.J.G."/>
            <person name="Bulyk M.L."/>
            <person name="Harlow E."/>
            <person name="Marsischky G."/>
            <person name="Kolodner R.D."/>
            <person name="LaBaer J."/>
        </authorList>
    </citation>
    <scope>NUCLEOTIDE SEQUENCE [GENOMIC DNA]</scope>
    <source>
        <strain>ATCC 204508 / S288c</strain>
    </source>
</reference>
<reference key="4">
    <citation type="journal article" date="2004" name="J. Biol. Chem.">
        <title>The role of Hot13p and redox chemistry in the mitochondrial TIM22 import pathway.</title>
        <authorList>
            <person name="Curran S.P."/>
            <person name="Leuenberger D."/>
            <person name="Leverich E.P."/>
            <person name="Hwang D.K."/>
            <person name="Beverly K.N."/>
            <person name="Koehler C.M."/>
        </authorList>
    </citation>
    <scope>IDENTIFICATION BY MASS SPECTROMETRY</scope>
    <scope>FUNCTION</scope>
    <scope>SUBCELLULAR LOCATION</scope>
</reference>
<reference key="5">
    <citation type="journal article" date="2012" name="Proc. Natl. Acad. Sci. U.S.A.">
        <title>N-terminal acetylome analyses and functional insights of the N-terminal acetyltransferase NatB.</title>
        <authorList>
            <person name="Van Damme P."/>
            <person name="Lasa M."/>
            <person name="Polevoda B."/>
            <person name="Gazquez C."/>
            <person name="Elosegui-Artola A."/>
            <person name="Kim D.S."/>
            <person name="De Juan-Pardo E."/>
            <person name="Demeyer K."/>
            <person name="Hole K."/>
            <person name="Larrea E."/>
            <person name="Timmerman E."/>
            <person name="Prieto J."/>
            <person name="Arnesen T."/>
            <person name="Sherman F."/>
            <person name="Gevaert K."/>
            <person name="Aldabe R."/>
        </authorList>
    </citation>
    <scope>IDENTIFICATION BY MASS SPECTROMETRY [LARGE SCALE ANALYSIS]</scope>
</reference>
<accession>P36078</accession>
<accession>D6VXK4</accession>
<accession>Q6Q598</accession>
<protein>
    <recommendedName>
        <fullName>Helper of Tim protein 13</fullName>
    </recommendedName>
</protein>
<gene>
    <name type="primary">HOT13</name>
    <name type="ordered locus">YKL084W</name>
</gene>